<dbReference type="EC" id="2.5.1.16" evidence="1"/>
<dbReference type="EMBL" id="CP001403">
    <property type="protein sequence ID" value="ACP45647.1"/>
    <property type="molecule type" value="Genomic_DNA"/>
</dbReference>
<dbReference type="RefSeq" id="WP_012711385.1">
    <property type="nucleotide sequence ID" value="NC_012622.1"/>
</dbReference>
<dbReference type="SMR" id="C3NEA8"/>
<dbReference type="KEGG" id="siy:YG5714_1380"/>
<dbReference type="HOGENOM" id="CLU_048199_0_1_2"/>
<dbReference type="UniPathway" id="UPA00248">
    <property type="reaction ID" value="UER00314"/>
</dbReference>
<dbReference type="Proteomes" id="UP000002308">
    <property type="component" value="Chromosome"/>
</dbReference>
<dbReference type="GO" id="GO:0005737">
    <property type="term" value="C:cytoplasm"/>
    <property type="evidence" value="ECO:0007669"/>
    <property type="project" value="UniProtKB-SubCell"/>
</dbReference>
<dbReference type="GO" id="GO:0004766">
    <property type="term" value="F:spermidine synthase activity"/>
    <property type="evidence" value="ECO:0007669"/>
    <property type="project" value="UniProtKB-UniRule"/>
</dbReference>
<dbReference type="GO" id="GO:0010487">
    <property type="term" value="F:thermospermine synthase activity"/>
    <property type="evidence" value="ECO:0007669"/>
    <property type="project" value="TreeGrafter"/>
</dbReference>
<dbReference type="GO" id="GO:0008295">
    <property type="term" value="P:spermidine biosynthetic process"/>
    <property type="evidence" value="ECO:0007669"/>
    <property type="project" value="UniProtKB-UniRule"/>
</dbReference>
<dbReference type="CDD" id="cd02440">
    <property type="entry name" value="AdoMet_MTases"/>
    <property type="match status" value="1"/>
</dbReference>
<dbReference type="FunFam" id="2.30.140.10:FF:000017">
    <property type="entry name" value="Polyamine aminopropyltransferase"/>
    <property type="match status" value="1"/>
</dbReference>
<dbReference type="FunFam" id="3.40.50.150:FF:000088">
    <property type="entry name" value="Polyamine aminopropyltransferase"/>
    <property type="match status" value="1"/>
</dbReference>
<dbReference type="Gene3D" id="2.30.140.10">
    <property type="entry name" value="Spermidine synthase, tetramerisation domain"/>
    <property type="match status" value="1"/>
</dbReference>
<dbReference type="Gene3D" id="3.40.50.150">
    <property type="entry name" value="Vaccinia Virus protein VP39"/>
    <property type="match status" value="1"/>
</dbReference>
<dbReference type="HAMAP" id="MF_00198">
    <property type="entry name" value="Spermidine_synth"/>
    <property type="match status" value="1"/>
</dbReference>
<dbReference type="InterPro" id="IPR030374">
    <property type="entry name" value="PABS"/>
</dbReference>
<dbReference type="InterPro" id="IPR030373">
    <property type="entry name" value="PABS_CS"/>
</dbReference>
<dbReference type="InterPro" id="IPR029063">
    <property type="entry name" value="SAM-dependent_MTases_sf"/>
</dbReference>
<dbReference type="InterPro" id="IPR001045">
    <property type="entry name" value="Spermi_synthase"/>
</dbReference>
<dbReference type="InterPro" id="IPR035246">
    <property type="entry name" value="Spermidine_synt_N"/>
</dbReference>
<dbReference type="InterPro" id="IPR037163">
    <property type="entry name" value="Spermidine_synt_N_sf"/>
</dbReference>
<dbReference type="PANTHER" id="PTHR43317">
    <property type="entry name" value="THERMOSPERMINE SYNTHASE ACAULIS5"/>
    <property type="match status" value="1"/>
</dbReference>
<dbReference type="PANTHER" id="PTHR43317:SF1">
    <property type="entry name" value="THERMOSPERMINE SYNTHASE ACAULIS5"/>
    <property type="match status" value="1"/>
</dbReference>
<dbReference type="Pfam" id="PF17284">
    <property type="entry name" value="Spermine_synt_N"/>
    <property type="match status" value="1"/>
</dbReference>
<dbReference type="Pfam" id="PF01564">
    <property type="entry name" value="Spermine_synth"/>
    <property type="match status" value="1"/>
</dbReference>
<dbReference type="SUPFAM" id="SSF53335">
    <property type="entry name" value="S-adenosyl-L-methionine-dependent methyltransferases"/>
    <property type="match status" value="1"/>
</dbReference>
<dbReference type="PROSITE" id="PS01330">
    <property type="entry name" value="PABS_1"/>
    <property type="match status" value="1"/>
</dbReference>
<dbReference type="PROSITE" id="PS51006">
    <property type="entry name" value="PABS_2"/>
    <property type="match status" value="1"/>
</dbReference>
<sequence length="301" mass="34770">MFGWHWLLEWQTPYEFHGHLIEKVFAEEKTPYQHVTLVEFTRFGKGLIIDGKVQSTLYDEHIYHELLVHPLLLSLPKPPKNVLILGGGEGATLREVLKYKSVEKAVMVDIDEKVIEFAKKYLYEWHQGAFEDKRTSLVITDGLKFINETKDKYDAIILDLTDPIKDSTSYMLYTKEFYEKLRGILNQGGGIVTQATSPSFSLEVYVTIYNTIKEVFKEASASYTYMASFDGLWGFVYGGVRPDLLSEDEVNSRIRERISGQLRFYDDYSHKISFSLPKNIKSEFKKITKVSTEKDPIYVPA</sequence>
<organism>
    <name type="scientific">Saccharolobus islandicus (strain Y.G.57.14 / Yellowstone #1)</name>
    <name type="common">Sulfolobus islandicus</name>
    <dbReference type="NCBI Taxonomy" id="439386"/>
    <lineage>
        <taxon>Archaea</taxon>
        <taxon>Thermoproteota</taxon>
        <taxon>Thermoprotei</taxon>
        <taxon>Sulfolobales</taxon>
        <taxon>Sulfolobaceae</taxon>
        <taxon>Saccharolobus</taxon>
    </lineage>
</organism>
<keyword id="KW-0963">Cytoplasm</keyword>
<keyword id="KW-0620">Polyamine biosynthesis</keyword>
<keyword id="KW-0745">Spermidine biosynthesis</keyword>
<keyword id="KW-0808">Transferase</keyword>
<evidence type="ECO:0000255" key="1">
    <source>
        <dbReference type="HAMAP-Rule" id="MF_00198"/>
    </source>
</evidence>
<reference key="1">
    <citation type="journal article" date="2009" name="Proc. Natl. Acad. Sci. U.S.A.">
        <title>Biogeography of the Sulfolobus islandicus pan-genome.</title>
        <authorList>
            <person name="Reno M.L."/>
            <person name="Held N.L."/>
            <person name="Fields C.J."/>
            <person name="Burke P.V."/>
            <person name="Whitaker R.J."/>
        </authorList>
    </citation>
    <scope>NUCLEOTIDE SEQUENCE [LARGE SCALE GENOMIC DNA]</scope>
    <source>
        <strain>Y.G.57.14 / Yellowstone #1</strain>
    </source>
</reference>
<gene>
    <name evidence="1" type="primary">speE</name>
    <name type="ordered locus">YG5714_1380</name>
</gene>
<feature type="chain" id="PRO_1000204082" description="Polyamine aminopropyltransferase">
    <location>
        <begin position="1"/>
        <end position="301"/>
    </location>
</feature>
<feature type="domain" description="PABS" evidence="1">
    <location>
        <begin position="4"/>
        <end position="240"/>
    </location>
</feature>
<feature type="active site" description="Proton acceptor" evidence="1">
    <location>
        <position position="159"/>
    </location>
</feature>
<feature type="binding site" evidence="1">
    <location>
        <position position="33"/>
    </location>
    <ligand>
        <name>S-methyl-5'-thioadenosine</name>
        <dbReference type="ChEBI" id="CHEBI:17509"/>
    </ligand>
</feature>
<feature type="binding site" evidence="1">
    <location>
        <position position="64"/>
    </location>
    <ligand>
        <name>spermidine</name>
        <dbReference type="ChEBI" id="CHEBI:57834"/>
    </ligand>
</feature>
<feature type="binding site" evidence="1">
    <location>
        <position position="89"/>
    </location>
    <ligand>
        <name>spermidine</name>
        <dbReference type="ChEBI" id="CHEBI:57834"/>
    </ligand>
</feature>
<feature type="binding site" evidence="1">
    <location>
        <position position="109"/>
    </location>
    <ligand>
        <name>S-methyl-5'-thioadenosine</name>
        <dbReference type="ChEBI" id="CHEBI:17509"/>
    </ligand>
</feature>
<feature type="binding site" evidence="1">
    <location>
        <begin position="141"/>
        <end position="142"/>
    </location>
    <ligand>
        <name>S-methyl-5'-thioadenosine</name>
        <dbReference type="ChEBI" id="CHEBI:17509"/>
    </ligand>
</feature>
<accession>C3NEA8</accession>
<protein>
    <recommendedName>
        <fullName evidence="1">Polyamine aminopropyltransferase</fullName>
    </recommendedName>
    <alternativeName>
        <fullName evidence="1">Putrescine aminopropyltransferase</fullName>
        <shortName evidence="1">PAPT</shortName>
    </alternativeName>
    <alternativeName>
        <fullName evidence="1">Spermidine synthase</fullName>
        <shortName evidence="1">SPDS</shortName>
        <shortName evidence="1">SPDSY</shortName>
        <ecNumber evidence="1">2.5.1.16</ecNumber>
    </alternativeName>
</protein>
<comment type="function">
    <text evidence="1">Catalyzes the irreversible transfer of a propylamine group from the amino donor S-adenosylmethioninamine (decarboxy-AdoMet) to putrescine (1,4-diaminobutane) to yield spermidine.</text>
</comment>
<comment type="catalytic activity">
    <reaction evidence="1">
        <text>S-adenosyl 3-(methylsulfanyl)propylamine + putrescine = S-methyl-5'-thioadenosine + spermidine + H(+)</text>
        <dbReference type="Rhea" id="RHEA:12721"/>
        <dbReference type="ChEBI" id="CHEBI:15378"/>
        <dbReference type="ChEBI" id="CHEBI:17509"/>
        <dbReference type="ChEBI" id="CHEBI:57443"/>
        <dbReference type="ChEBI" id="CHEBI:57834"/>
        <dbReference type="ChEBI" id="CHEBI:326268"/>
        <dbReference type="EC" id="2.5.1.16"/>
    </reaction>
</comment>
<comment type="pathway">
    <text evidence="1">Amine and polyamine biosynthesis; spermidine biosynthesis; spermidine from putrescine: step 1/1.</text>
</comment>
<comment type="subunit">
    <text evidence="1">Homodimer or homotetramer.</text>
</comment>
<comment type="subcellular location">
    <subcellularLocation>
        <location evidence="1">Cytoplasm</location>
    </subcellularLocation>
</comment>
<comment type="similarity">
    <text evidence="1">Belongs to the spermidine/spermine synthase family.</text>
</comment>
<name>SPEE_SACI7</name>
<proteinExistence type="inferred from homology"/>